<gene>
    <name evidence="1" type="primary">pfkA</name>
    <name type="ordered locus">BPUM_2562</name>
</gene>
<accession>A8FG55</accession>
<proteinExistence type="inferred from homology"/>
<keyword id="KW-0021">Allosteric enzyme</keyword>
<keyword id="KW-0067">ATP-binding</keyword>
<keyword id="KW-0963">Cytoplasm</keyword>
<keyword id="KW-0324">Glycolysis</keyword>
<keyword id="KW-0418">Kinase</keyword>
<keyword id="KW-0460">Magnesium</keyword>
<keyword id="KW-0479">Metal-binding</keyword>
<keyword id="KW-0547">Nucleotide-binding</keyword>
<keyword id="KW-0808">Transferase</keyword>
<sequence length="319" mass="34414">MKRIGVLTSGGDSPGMNAAVRAVVRKAIYHNVEVYGIYNGYSGLINGKIEKLEIGSVGDIIHRGGTKLYTARCPEFKTVEGREKGIENLKKFGIEGLVVIGGDGSFMGAKKLTELGFPCVGVPGTIDNDIPGTDFTIGFDTALNTVIDAIDKIRDTATSHERTYVVEVMGRHAGDIALWSGLAGGAESILIPEADYDMDEIIARLRRGHERGKKHSIIIVAEGVGSGVEFGKRIEEETSLETRVSVLGHIQRGGSPSAFDRVLASRLGAYAVELLLEGKGGRCVGIQSNELVHHDILDILDKKHTVDQNMYRLSQELSI</sequence>
<protein>
    <recommendedName>
        <fullName evidence="1">ATP-dependent 6-phosphofructokinase</fullName>
        <shortName evidence="1">ATP-PFK</shortName>
        <shortName evidence="1">Phosphofructokinase</shortName>
        <ecNumber evidence="1">2.7.1.11</ecNumber>
    </recommendedName>
    <alternativeName>
        <fullName evidence="1">Phosphohexokinase</fullName>
    </alternativeName>
</protein>
<name>PFKA_BACP2</name>
<reference key="1">
    <citation type="journal article" date="2007" name="PLoS ONE">
        <title>Paradoxical DNA repair and peroxide resistance gene conservation in Bacillus pumilus SAFR-032.</title>
        <authorList>
            <person name="Gioia J."/>
            <person name="Yerrapragada S."/>
            <person name="Qin X."/>
            <person name="Jiang H."/>
            <person name="Igboeli O.C."/>
            <person name="Muzny D."/>
            <person name="Dugan-Rocha S."/>
            <person name="Ding Y."/>
            <person name="Hawes A."/>
            <person name="Liu W."/>
            <person name="Perez L."/>
            <person name="Kovar C."/>
            <person name="Dinh H."/>
            <person name="Lee S."/>
            <person name="Nazareth L."/>
            <person name="Blyth P."/>
            <person name="Holder M."/>
            <person name="Buhay C."/>
            <person name="Tirumalai M.R."/>
            <person name="Liu Y."/>
            <person name="Dasgupta I."/>
            <person name="Bokhetache L."/>
            <person name="Fujita M."/>
            <person name="Karouia F."/>
            <person name="Eswara Moorthy P."/>
            <person name="Siefert J."/>
            <person name="Uzman A."/>
            <person name="Buzumbo P."/>
            <person name="Verma A."/>
            <person name="Zwiya H."/>
            <person name="McWilliams B.D."/>
            <person name="Olowu A."/>
            <person name="Clinkenbeard K.D."/>
            <person name="Newcombe D."/>
            <person name="Golebiewski L."/>
            <person name="Petrosino J.F."/>
            <person name="Nicholson W.L."/>
            <person name="Fox G.E."/>
            <person name="Venkateswaran K."/>
            <person name="Highlander S.K."/>
            <person name="Weinstock G.M."/>
        </authorList>
    </citation>
    <scope>NUCLEOTIDE SEQUENCE [LARGE SCALE GENOMIC DNA]</scope>
    <source>
        <strain>SAFR-032</strain>
    </source>
</reference>
<evidence type="ECO:0000255" key="1">
    <source>
        <dbReference type="HAMAP-Rule" id="MF_00339"/>
    </source>
</evidence>
<organism>
    <name type="scientific">Bacillus pumilus (strain SAFR-032)</name>
    <dbReference type="NCBI Taxonomy" id="315750"/>
    <lineage>
        <taxon>Bacteria</taxon>
        <taxon>Bacillati</taxon>
        <taxon>Bacillota</taxon>
        <taxon>Bacilli</taxon>
        <taxon>Bacillales</taxon>
        <taxon>Bacillaceae</taxon>
        <taxon>Bacillus</taxon>
    </lineage>
</organism>
<feature type="chain" id="PRO_1000059745" description="ATP-dependent 6-phosphofructokinase">
    <location>
        <begin position="1"/>
        <end position="319"/>
    </location>
</feature>
<feature type="active site" description="Proton acceptor" evidence="1">
    <location>
        <position position="127"/>
    </location>
</feature>
<feature type="binding site" evidence="1">
    <location>
        <position position="11"/>
    </location>
    <ligand>
        <name>ATP</name>
        <dbReference type="ChEBI" id="CHEBI:30616"/>
    </ligand>
</feature>
<feature type="binding site" evidence="1">
    <location>
        <begin position="21"/>
        <end position="25"/>
    </location>
    <ligand>
        <name>ADP</name>
        <dbReference type="ChEBI" id="CHEBI:456216"/>
        <note>allosteric activator; ligand shared between dimeric partners</note>
    </ligand>
</feature>
<feature type="binding site" evidence="1">
    <location>
        <begin position="72"/>
        <end position="73"/>
    </location>
    <ligand>
        <name>ATP</name>
        <dbReference type="ChEBI" id="CHEBI:30616"/>
    </ligand>
</feature>
<feature type="binding site" evidence="1">
    <location>
        <begin position="102"/>
        <end position="105"/>
    </location>
    <ligand>
        <name>ATP</name>
        <dbReference type="ChEBI" id="CHEBI:30616"/>
    </ligand>
</feature>
<feature type="binding site" evidence="1">
    <location>
        <position position="103"/>
    </location>
    <ligand>
        <name>Mg(2+)</name>
        <dbReference type="ChEBI" id="CHEBI:18420"/>
        <note>catalytic</note>
    </ligand>
</feature>
<feature type="binding site" description="in other chain" evidence="1">
    <location>
        <begin position="125"/>
        <end position="127"/>
    </location>
    <ligand>
        <name>substrate</name>
        <note>ligand shared between dimeric partners</note>
    </ligand>
</feature>
<feature type="binding site" description="in other chain" evidence="1">
    <location>
        <position position="154"/>
    </location>
    <ligand>
        <name>ADP</name>
        <dbReference type="ChEBI" id="CHEBI:456216"/>
        <note>allosteric activator; ligand shared between dimeric partners</note>
    </ligand>
</feature>
<feature type="binding site" evidence="1">
    <location>
        <position position="162"/>
    </location>
    <ligand>
        <name>substrate</name>
        <note>ligand shared between dimeric partners</note>
    </ligand>
</feature>
<feature type="binding site" description="in other chain" evidence="1">
    <location>
        <begin position="169"/>
        <end position="171"/>
    </location>
    <ligand>
        <name>substrate</name>
        <note>ligand shared between dimeric partners</note>
    </ligand>
</feature>
<feature type="binding site" description="in other chain" evidence="1">
    <location>
        <begin position="185"/>
        <end position="187"/>
    </location>
    <ligand>
        <name>ADP</name>
        <dbReference type="ChEBI" id="CHEBI:456216"/>
        <note>allosteric activator; ligand shared between dimeric partners</note>
    </ligand>
</feature>
<feature type="binding site" description="in other chain" evidence="1">
    <location>
        <position position="211"/>
    </location>
    <ligand>
        <name>ADP</name>
        <dbReference type="ChEBI" id="CHEBI:456216"/>
        <note>allosteric activator; ligand shared between dimeric partners</note>
    </ligand>
</feature>
<feature type="binding site" description="in other chain" evidence="1">
    <location>
        <begin position="213"/>
        <end position="215"/>
    </location>
    <ligand>
        <name>ADP</name>
        <dbReference type="ChEBI" id="CHEBI:456216"/>
        <note>allosteric activator; ligand shared between dimeric partners</note>
    </ligand>
</feature>
<feature type="binding site" description="in other chain" evidence="1">
    <location>
        <position position="222"/>
    </location>
    <ligand>
        <name>substrate</name>
        <note>ligand shared between dimeric partners</note>
    </ligand>
</feature>
<feature type="binding site" evidence="1">
    <location>
        <position position="243"/>
    </location>
    <ligand>
        <name>substrate</name>
        <note>ligand shared between dimeric partners</note>
    </ligand>
</feature>
<feature type="binding site" description="in other chain" evidence="1">
    <location>
        <begin position="249"/>
        <end position="252"/>
    </location>
    <ligand>
        <name>substrate</name>
        <note>ligand shared between dimeric partners</note>
    </ligand>
</feature>
<comment type="function">
    <text evidence="1">Catalyzes the phosphorylation of D-fructose 6-phosphate to fructose 1,6-bisphosphate by ATP, the first committing step of glycolysis.</text>
</comment>
<comment type="catalytic activity">
    <reaction evidence="1">
        <text>beta-D-fructose 6-phosphate + ATP = beta-D-fructose 1,6-bisphosphate + ADP + H(+)</text>
        <dbReference type="Rhea" id="RHEA:16109"/>
        <dbReference type="ChEBI" id="CHEBI:15378"/>
        <dbReference type="ChEBI" id="CHEBI:30616"/>
        <dbReference type="ChEBI" id="CHEBI:32966"/>
        <dbReference type="ChEBI" id="CHEBI:57634"/>
        <dbReference type="ChEBI" id="CHEBI:456216"/>
        <dbReference type="EC" id="2.7.1.11"/>
    </reaction>
</comment>
<comment type="cofactor">
    <cofactor evidence="1">
        <name>Mg(2+)</name>
        <dbReference type="ChEBI" id="CHEBI:18420"/>
    </cofactor>
</comment>
<comment type="activity regulation">
    <text evidence="1">Allosterically activated by ADP and other diphosphonucleosides, and allosterically inhibited by phosphoenolpyruvate.</text>
</comment>
<comment type="pathway">
    <text evidence="1">Carbohydrate degradation; glycolysis; D-glyceraldehyde 3-phosphate and glycerone phosphate from D-glucose: step 3/4.</text>
</comment>
<comment type="subunit">
    <text evidence="1">Homotetramer.</text>
</comment>
<comment type="subcellular location">
    <subcellularLocation>
        <location evidence="1">Cytoplasm</location>
    </subcellularLocation>
</comment>
<comment type="similarity">
    <text evidence="1">Belongs to the phosphofructokinase type A (PFKA) family. ATP-dependent PFK group I subfamily. Prokaryotic clade 'B1' sub-subfamily.</text>
</comment>
<dbReference type="EC" id="2.7.1.11" evidence="1"/>
<dbReference type="EMBL" id="CP000813">
    <property type="protein sequence ID" value="ABV63222.1"/>
    <property type="molecule type" value="Genomic_DNA"/>
</dbReference>
<dbReference type="RefSeq" id="WP_012010865.1">
    <property type="nucleotide sequence ID" value="NZ_VEHA01000003.1"/>
</dbReference>
<dbReference type="SMR" id="A8FG55"/>
<dbReference type="STRING" id="315750.BPUM_2562"/>
<dbReference type="GeneID" id="5621826"/>
<dbReference type="KEGG" id="bpu:BPUM_2562"/>
<dbReference type="eggNOG" id="COG0205">
    <property type="taxonomic scope" value="Bacteria"/>
</dbReference>
<dbReference type="HOGENOM" id="CLU_020655_0_1_9"/>
<dbReference type="OrthoDB" id="9802503at2"/>
<dbReference type="UniPathway" id="UPA00109">
    <property type="reaction ID" value="UER00182"/>
</dbReference>
<dbReference type="Proteomes" id="UP000001355">
    <property type="component" value="Chromosome"/>
</dbReference>
<dbReference type="GO" id="GO:0005945">
    <property type="term" value="C:6-phosphofructokinase complex"/>
    <property type="evidence" value="ECO:0007669"/>
    <property type="project" value="TreeGrafter"/>
</dbReference>
<dbReference type="GO" id="GO:0003872">
    <property type="term" value="F:6-phosphofructokinase activity"/>
    <property type="evidence" value="ECO:0007669"/>
    <property type="project" value="UniProtKB-UniRule"/>
</dbReference>
<dbReference type="GO" id="GO:0016208">
    <property type="term" value="F:AMP binding"/>
    <property type="evidence" value="ECO:0007669"/>
    <property type="project" value="TreeGrafter"/>
</dbReference>
<dbReference type="GO" id="GO:0005524">
    <property type="term" value="F:ATP binding"/>
    <property type="evidence" value="ECO:0007669"/>
    <property type="project" value="UniProtKB-KW"/>
</dbReference>
<dbReference type="GO" id="GO:0070095">
    <property type="term" value="F:fructose-6-phosphate binding"/>
    <property type="evidence" value="ECO:0007669"/>
    <property type="project" value="TreeGrafter"/>
</dbReference>
<dbReference type="GO" id="GO:0042802">
    <property type="term" value="F:identical protein binding"/>
    <property type="evidence" value="ECO:0007669"/>
    <property type="project" value="TreeGrafter"/>
</dbReference>
<dbReference type="GO" id="GO:0046872">
    <property type="term" value="F:metal ion binding"/>
    <property type="evidence" value="ECO:0007669"/>
    <property type="project" value="UniProtKB-KW"/>
</dbReference>
<dbReference type="GO" id="GO:0048029">
    <property type="term" value="F:monosaccharide binding"/>
    <property type="evidence" value="ECO:0007669"/>
    <property type="project" value="TreeGrafter"/>
</dbReference>
<dbReference type="GO" id="GO:0061621">
    <property type="term" value="P:canonical glycolysis"/>
    <property type="evidence" value="ECO:0007669"/>
    <property type="project" value="TreeGrafter"/>
</dbReference>
<dbReference type="GO" id="GO:0030388">
    <property type="term" value="P:fructose 1,6-bisphosphate metabolic process"/>
    <property type="evidence" value="ECO:0007669"/>
    <property type="project" value="TreeGrafter"/>
</dbReference>
<dbReference type="GO" id="GO:0006002">
    <property type="term" value="P:fructose 6-phosphate metabolic process"/>
    <property type="evidence" value="ECO:0007669"/>
    <property type="project" value="InterPro"/>
</dbReference>
<dbReference type="CDD" id="cd00763">
    <property type="entry name" value="Bacterial_PFK"/>
    <property type="match status" value="1"/>
</dbReference>
<dbReference type="FunFam" id="3.40.50.450:FF:000001">
    <property type="entry name" value="ATP-dependent 6-phosphofructokinase"/>
    <property type="match status" value="1"/>
</dbReference>
<dbReference type="FunFam" id="3.40.50.460:FF:000002">
    <property type="entry name" value="ATP-dependent 6-phosphofructokinase"/>
    <property type="match status" value="1"/>
</dbReference>
<dbReference type="Gene3D" id="3.40.50.450">
    <property type="match status" value="1"/>
</dbReference>
<dbReference type="Gene3D" id="3.40.50.460">
    <property type="entry name" value="Phosphofructokinase domain"/>
    <property type="match status" value="1"/>
</dbReference>
<dbReference type="HAMAP" id="MF_00339">
    <property type="entry name" value="Phosphofructokinase_I_B1"/>
    <property type="match status" value="1"/>
</dbReference>
<dbReference type="InterPro" id="IPR022953">
    <property type="entry name" value="ATP_PFK"/>
</dbReference>
<dbReference type="InterPro" id="IPR012003">
    <property type="entry name" value="ATP_PFK_prok-type"/>
</dbReference>
<dbReference type="InterPro" id="IPR012828">
    <property type="entry name" value="PFKA_ATP_prok"/>
</dbReference>
<dbReference type="InterPro" id="IPR015912">
    <property type="entry name" value="Phosphofructokinase_CS"/>
</dbReference>
<dbReference type="InterPro" id="IPR000023">
    <property type="entry name" value="Phosphofructokinase_dom"/>
</dbReference>
<dbReference type="InterPro" id="IPR035966">
    <property type="entry name" value="PKF_sf"/>
</dbReference>
<dbReference type="NCBIfam" id="TIGR02482">
    <property type="entry name" value="PFKA_ATP"/>
    <property type="match status" value="1"/>
</dbReference>
<dbReference type="NCBIfam" id="NF002872">
    <property type="entry name" value="PRK03202.1"/>
    <property type="match status" value="1"/>
</dbReference>
<dbReference type="PANTHER" id="PTHR13697:SF4">
    <property type="entry name" value="ATP-DEPENDENT 6-PHOSPHOFRUCTOKINASE"/>
    <property type="match status" value="1"/>
</dbReference>
<dbReference type="PANTHER" id="PTHR13697">
    <property type="entry name" value="PHOSPHOFRUCTOKINASE"/>
    <property type="match status" value="1"/>
</dbReference>
<dbReference type="Pfam" id="PF00365">
    <property type="entry name" value="PFK"/>
    <property type="match status" value="1"/>
</dbReference>
<dbReference type="PIRSF" id="PIRSF000532">
    <property type="entry name" value="ATP_PFK_prok"/>
    <property type="match status" value="1"/>
</dbReference>
<dbReference type="PRINTS" id="PR00476">
    <property type="entry name" value="PHFRCTKINASE"/>
</dbReference>
<dbReference type="SUPFAM" id="SSF53784">
    <property type="entry name" value="Phosphofructokinase"/>
    <property type="match status" value="1"/>
</dbReference>
<dbReference type="PROSITE" id="PS00433">
    <property type="entry name" value="PHOSPHOFRUCTOKINASE"/>
    <property type="match status" value="1"/>
</dbReference>